<proteinExistence type="evidence at protein level"/>
<gene>
    <name evidence="1" type="primary">recA</name>
    <name type="ordered locus">TM_1859</name>
</gene>
<accession>P36203</accession>
<reference key="1">
    <citation type="journal article" date="1994" name="J. Biol. Chem.">
        <title>Cloning, sequencing, and expression of RecA proteins from three distantly related thermophilic eubacteria.</title>
        <authorList>
            <person name="Wetmur J.G."/>
            <person name="Wong D.M."/>
            <person name="Ortiz B."/>
            <person name="Tong J."/>
            <person name="Reichert F."/>
            <person name="Gelfand D.H."/>
        </authorList>
    </citation>
    <scope>NUCLEOTIDE SEQUENCE [GENOMIC DNA]</scope>
</reference>
<reference key="2">
    <citation type="journal article" date="1999" name="Nature">
        <title>Evidence for lateral gene transfer between Archaea and Bacteria from genome sequence of Thermotoga maritima.</title>
        <authorList>
            <person name="Nelson K.E."/>
            <person name="Clayton R.A."/>
            <person name="Gill S.R."/>
            <person name="Gwinn M.L."/>
            <person name="Dodson R.J."/>
            <person name="Haft D.H."/>
            <person name="Hickey E.K."/>
            <person name="Peterson J.D."/>
            <person name="Nelson W.C."/>
            <person name="Ketchum K.A."/>
            <person name="McDonald L.A."/>
            <person name="Utterback T.R."/>
            <person name="Malek J.A."/>
            <person name="Linher K.D."/>
            <person name="Garrett M.M."/>
            <person name="Stewart A.M."/>
            <person name="Cotton M.D."/>
            <person name="Pratt M.S."/>
            <person name="Phillips C.A."/>
            <person name="Richardson D.L."/>
            <person name="Heidelberg J.F."/>
            <person name="Sutton G.G."/>
            <person name="Fleischmann R.D."/>
            <person name="Eisen J.A."/>
            <person name="White O."/>
            <person name="Salzberg S.L."/>
            <person name="Smith H.O."/>
            <person name="Venter J.C."/>
            <person name="Fraser C.M."/>
        </authorList>
    </citation>
    <scope>NUCLEOTIDE SEQUENCE [LARGE SCALE GENOMIC DNA]</scope>
    <source>
        <strain>ATCC 43589 / DSM 3109 / JCM 10099 / NBRC 100826 / MSB8</strain>
    </source>
</reference>
<evidence type="ECO:0000255" key="1">
    <source>
        <dbReference type="HAMAP-Rule" id="MF_00268"/>
    </source>
</evidence>
<evidence type="ECO:0007829" key="2">
    <source>
        <dbReference type="PDB" id="3HR8"/>
    </source>
</evidence>
<protein>
    <recommendedName>
        <fullName evidence="1">Protein RecA</fullName>
    </recommendedName>
    <alternativeName>
        <fullName evidence="1">Recombinase A</fullName>
    </alternativeName>
</protein>
<keyword id="KW-0002">3D-structure</keyword>
<keyword id="KW-0067">ATP-binding</keyword>
<keyword id="KW-0963">Cytoplasm</keyword>
<keyword id="KW-0227">DNA damage</keyword>
<keyword id="KW-0233">DNA recombination</keyword>
<keyword id="KW-0234">DNA repair</keyword>
<keyword id="KW-0238">DNA-binding</keyword>
<keyword id="KW-0547">Nucleotide-binding</keyword>
<keyword id="KW-1185">Reference proteome</keyword>
<keyword id="KW-0742">SOS response</keyword>
<sequence length="356" mass="38798">MPEEKQKKSVLEKALKRIEENFGKGSIMILGDETQVQPVEVIPTGSLAIDIATGVGGYPRGRIVEIFGQESSGKTTLALHAIAEAQKMGGVAAFIDAEHALDPVYAKNLGVDLKSLLISQPDHGEQALEIVDELVRSGVVDLIVVDSVAALVPRAEIEGAMGDMQVGLQARLMSQALRKIAGSVNKSKAVVIFTNQIRMKIGVMFGSPETTTGGLALKFYATMRMEVRRGEPIKEGKDVIGNVISVKIVKNKVAPPFKTAQTYIIYGKGIDREYELFNIAVNEGIVDRKGSWYYYTTLKGEEVSLGQGSSNAVQFLKDNPEIAGEIERRIREKYGLLSVEKEEQRKEKKSSGEEAS</sequence>
<comment type="function">
    <text evidence="1">Can catalyze the hydrolysis of ATP in the presence of single-stranded DNA, the ATP-dependent uptake of single-stranded DNA by duplex DNA, and the ATP-dependent hybridization of homologous single-stranded DNAs. It interacts with LexA causing its activation and leading to its autocatalytic cleavage.</text>
</comment>
<comment type="subcellular location">
    <subcellularLocation>
        <location evidence="1">Cytoplasm</location>
    </subcellularLocation>
</comment>
<comment type="similarity">
    <text evidence="1">Belongs to the RecA family.</text>
</comment>
<name>RECA_THEMA</name>
<dbReference type="EMBL" id="L23425">
    <property type="protein sequence ID" value="AAA27417.1"/>
    <property type="molecule type" value="Genomic_DNA"/>
</dbReference>
<dbReference type="EMBL" id="AE000512">
    <property type="protein sequence ID" value="AAD36921.1"/>
    <property type="molecule type" value="Genomic_DNA"/>
</dbReference>
<dbReference type="PIR" id="D55020">
    <property type="entry name" value="D55020"/>
</dbReference>
<dbReference type="RefSeq" id="NP_229655.1">
    <property type="nucleotide sequence ID" value="NC_000853.1"/>
</dbReference>
<dbReference type="RefSeq" id="WP_004082410.1">
    <property type="nucleotide sequence ID" value="NC_000853.1"/>
</dbReference>
<dbReference type="PDB" id="3HR8">
    <property type="method" value="X-ray"/>
    <property type="resolution" value="1.95 A"/>
    <property type="chains" value="A=1-356"/>
</dbReference>
<dbReference type="PDBsum" id="3HR8"/>
<dbReference type="SMR" id="P36203"/>
<dbReference type="FunCoup" id="P36203">
    <property type="interactions" value="392"/>
</dbReference>
<dbReference type="STRING" id="243274.TM_1859"/>
<dbReference type="PaxDb" id="243274-THEMA_04875"/>
<dbReference type="EnsemblBacteria" id="AAD36921">
    <property type="protein sequence ID" value="AAD36921"/>
    <property type="gene ID" value="TM_1859"/>
</dbReference>
<dbReference type="KEGG" id="tma:TM1859"/>
<dbReference type="KEGG" id="tmi:THEMA_04875"/>
<dbReference type="KEGG" id="tmm:Tmari_1874"/>
<dbReference type="KEGG" id="tmw:THMA_1909"/>
<dbReference type="eggNOG" id="COG0468">
    <property type="taxonomic scope" value="Bacteria"/>
</dbReference>
<dbReference type="InParanoid" id="P36203"/>
<dbReference type="OrthoDB" id="9776733at2"/>
<dbReference type="EvolutionaryTrace" id="P36203"/>
<dbReference type="Proteomes" id="UP000008183">
    <property type="component" value="Chromosome"/>
</dbReference>
<dbReference type="GO" id="GO:0005737">
    <property type="term" value="C:cytoplasm"/>
    <property type="evidence" value="ECO:0007669"/>
    <property type="project" value="UniProtKB-SubCell"/>
</dbReference>
<dbReference type="GO" id="GO:0005524">
    <property type="term" value="F:ATP binding"/>
    <property type="evidence" value="ECO:0007669"/>
    <property type="project" value="UniProtKB-UniRule"/>
</dbReference>
<dbReference type="GO" id="GO:0016887">
    <property type="term" value="F:ATP hydrolysis activity"/>
    <property type="evidence" value="ECO:0007669"/>
    <property type="project" value="InterPro"/>
</dbReference>
<dbReference type="GO" id="GO:0140664">
    <property type="term" value="F:ATP-dependent DNA damage sensor activity"/>
    <property type="evidence" value="ECO:0007669"/>
    <property type="project" value="InterPro"/>
</dbReference>
<dbReference type="GO" id="GO:0003684">
    <property type="term" value="F:damaged DNA binding"/>
    <property type="evidence" value="ECO:0007669"/>
    <property type="project" value="UniProtKB-UniRule"/>
</dbReference>
<dbReference type="GO" id="GO:0003697">
    <property type="term" value="F:single-stranded DNA binding"/>
    <property type="evidence" value="ECO:0007669"/>
    <property type="project" value="UniProtKB-UniRule"/>
</dbReference>
<dbReference type="GO" id="GO:0006310">
    <property type="term" value="P:DNA recombination"/>
    <property type="evidence" value="ECO:0007669"/>
    <property type="project" value="UniProtKB-UniRule"/>
</dbReference>
<dbReference type="GO" id="GO:0006281">
    <property type="term" value="P:DNA repair"/>
    <property type="evidence" value="ECO:0007669"/>
    <property type="project" value="UniProtKB-UniRule"/>
</dbReference>
<dbReference type="GO" id="GO:0009432">
    <property type="term" value="P:SOS response"/>
    <property type="evidence" value="ECO:0007669"/>
    <property type="project" value="UniProtKB-UniRule"/>
</dbReference>
<dbReference type="CDD" id="cd00983">
    <property type="entry name" value="RecA"/>
    <property type="match status" value="1"/>
</dbReference>
<dbReference type="FunFam" id="3.40.50.300:FF:000087">
    <property type="entry name" value="Recombinase RecA"/>
    <property type="match status" value="1"/>
</dbReference>
<dbReference type="Gene3D" id="3.40.50.300">
    <property type="entry name" value="P-loop containing nucleotide triphosphate hydrolases"/>
    <property type="match status" value="1"/>
</dbReference>
<dbReference type="HAMAP" id="MF_00268">
    <property type="entry name" value="RecA"/>
    <property type="match status" value="1"/>
</dbReference>
<dbReference type="InterPro" id="IPR003593">
    <property type="entry name" value="AAA+_ATPase"/>
</dbReference>
<dbReference type="InterPro" id="IPR013765">
    <property type="entry name" value="DNA_recomb/repair_RecA"/>
</dbReference>
<dbReference type="InterPro" id="IPR020584">
    <property type="entry name" value="DNA_recomb/repair_RecA_CS"/>
</dbReference>
<dbReference type="InterPro" id="IPR027417">
    <property type="entry name" value="P-loop_NTPase"/>
</dbReference>
<dbReference type="InterPro" id="IPR049261">
    <property type="entry name" value="RecA-like_C"/>
</dbReference>
<dbReference type="InterPro" id="IPR049428">
    <property type="entry name" value="RecA-like_N"/>
</dbReference>
<dbReference type="InterPro" id="IPR020588">
    <property type="entry name" value="RecA_ATP-bd"/>
</dbReference>
<dbReference type="InterPro" id="IPR023400">
    <property type="entry name" value="RecA_C_sf"/>
</dbReference>
<dbReference type="InterPro" id="IPR020587">
    <property type="entry name" value="RecA_monomer-monomer_interface"/>
</dbReference>
<dbReference type="NCBIfam" id="TIGR02012">
    <property type="entry name" value="tigrfam_recA"/>
    <property type="match status" value="1"/>
</dbReference>
<dbReference type="PANTHER" id="PTHR45900:SF1">
    <property type="entry name" value="MITOCHONDRIAL DNA REPAIR PROTEIN RECA HOMOLOG-RELATED"/>
    <property type="match status" value="1"/>
</dbReference>
<dbReference type="PANTHER" id="PTHR45900">
    <property type="entry name" value="RECA"/>
    <property type="match status" value="1"/>
</dbReference>
<dbReference type="Pfam" id="PF00154">
    <property type="entry name" value="RecA"/>
    <property type="match status" value="1"/>
</dbReference>
<dbReference type="Pfam" id="PF21096">
    <property type="entry name" value="RecA_C"/>
    <property type="match status" value="1"/>
</dbReference>
<dbReference type="PRINTS" id="PR00142">
    <property type="entry name" value="RECA"/>
</dbReference>
<dbReference type="SMART" id="SM00382">
    <property type="entry name" value="AAA"/>
    <property type="match status" value="1"/>
</dbReference>
<dbReference type="SUPFAM" id="SSF52540">
    <property type="entry name" value="P-loop containing nucleoside triphosphate hydrolases"/>
    <property type="match status" value="1"/>
</dbReference>
<dbReference type="SUPFAM" id="SSF54752">
    <property type="entry name" value="RecA protein, C-terminal domain"/>
    <property type="match status" value="1"/>
</dbReference>
<dbReference type="PROSITE" id="PS00321">
    <property type="entry name" value="RECA_1"/>
    <property type="match status" value="1"/>
</dbReference>
<dbReference type="PROSITE" id="PS50162">
    <property type="entry name" value="RECA_2"/>
    <property type="match status" value="1"/>
</dbReference>
<dbReference type="PROSITE" id="PS50163">
    <property type="entry name" value="RECA_3"/>
    <property type="match status" value="1"/>
</dbReference>
<feature type="chain" id="PRO_0000122878" description="Protein RecA">
    <location>
        <begin position="1"/>
        <end position="356"/>
    </location>
</feature>
<feature type="binding site" evidence="1">
    <location>
        <begin position="68"/>
        <end position="75"/>
    </location>
    <ligand>
        <name>ATP</name>
        <dbReference type="ChEBI" id="CHEBI:30616"/>
    </ligand>
</feature>
<feature type="helix" evidence="2">
    <location>
        <begin position="5"/>
        <end position="22"/>
    </location>
</feature>
<feature type="helix" evidence="2">
    <location>
        <begin position="47"/>
        <end position="52"/>
    </location>
</feature>
<feature type="strand" evidence="2">
    <location>
        <begin position="54"/>
        <end position="59"/>
    </location>
</feature>
<feature type="strand" evidence="2">
    <location>
        <begin position="62"/>
        <end position="69"/>
    </location>
</feature>
<feature type="helix" evidence="2">
    <location>
        <begin position="74"/>
        <end position="87"/>
    </location>
</feature>
<feature type="strand" evidence="2">
    <location>
        <begin position="92"/>
        <end position="98"/>
    </location>
</feature>
<feature type="helix" evidence="2">
    <location>
        <begin position="103"/>
        <end position="109"/>
    </location>
</feature>
<feature type="helix" evidence="2">
    <location>
        <begin position="113"/>
        <end position="115"/>
    </location>
</feature>
<feature type="strand" evidence="2">
    <location>
        <begin position="117"/>
        <end position="119"/>
    </location>
</feature>
<feature type="helix" evidence="2">
    <location>
        <begin position="124"/>
        <end position="136"/>
    </location>
</feature>
<feature type="strand" evidence="2">
    <location>
        <begin position="141"/>
        <end position="146"/>
    </location>
</feature>
<feature type="turn" evidence="2">
    <location>
        <begin position="148"/>
        <end position="150"/>
    </location>
</feature>
<feature type="helix" evidence="2">
    <location>
        <begin position="154"/>
        <end position="157"/>
    </location>
</feature>
<feature type="helix" evidence="2">
    <location>
        <begin position="168"/>
        <end position="185"/>
    </location>
</feature>
<feature type="strand" evidence="2">
    <location>
        <begin position="190"/>
        <end position="199"/>
    </location>
</feature>
<feature type="strand" evidence="2">
    <location>
        <begin position="201"/>
        <end position="205"/>
    </location>
</feature>
<feature type="helix" evidence="2">
    <location>
        <begin position="213"/>
        <end position="220"/>
    </location>
</feature>
<feature type="strand" evidence="2">
    <location>
        <begin position="222"/>
        <end position="235"/>
    </location>
</feature>
<feature type="strand" evidence="2">
    <location>
        <begin position="238"/>
        <end position="254"/>
    </location>
</feature>
<feature type="strand" evidence="2">
    <location>
        <begin position="259"/>
        <end position="265"/>
    </location>
</feature>
<feature type="turn" evidence="2">
    <location>
        <begin position="266"/>
        <end position="268"/>
    </location>
</feature>
<feature type="helix" evidence="2">
    <location>
        <begin position="272"/>
        <end position="282"/>
    </location>
</feature>
<feature type="strand" evidence="2">
    <location>
        <begin position="285"/>
        <end position="289"/>
    </location>
</feature>
<feature type="strand" evidence="2">
    <location>
        <begin position="292"/>
        <end position="296"/>
    </location>
</feature>
<feature type="strand" evidence="2">
    <location>
        <begin position="302"/>
        <end position="307"/>
    </location>
</feature>
<feature type="helix" evidence="2">
    <location>
        <begin position="308"/>
        <end position="318"/>
    </location>
</feature>
<feature type="helix" evidence="2">
    <location>
        <begin position="320"/>
        <end position="333"/>
    </location>
</feature>
<organism>
    <name type="scientific">Thermotoga maritima (strain ATCC 43589 / DSM 3109 / JCM 10099 / NBRC 100826 / MSB8)</name>
    <dbReference type="NCBI Taxonomy" id="243274"/>
    <lineage>
        <taxon>Bacteria</taxon>
        <taxon>Thermotogati</taxon>
        <taxon>Thermotogota</taxon>
        <taxon>Thermotogae</taxon>
        <taxon>Thermotogales</taxon>
        <taxon>Thermotogaceae</taxon>
        <taxon>Thermotoga</taxon>
    </lineage>
</organism>